<comment type="function">
    <text evidence="1">Component of the BLOC-1 complex, a complex that is required for normal biogenesis of lysosome-related organelles (LRO). May play a role in intracellular vesicle trafficking (By similarity).</text>
</comment>
<comment type="subunit">
    <text evidence="1">Component of the biogenesis of lysosome-related organelles complex 1 (BLOC-1).</text>
</comment>
<comment type="similarity">
    <text evidence="2">Belongs to the BLOC1S5 family.</text>
</comment>
<dbReference type="EMBL" id="AAFI02000043">
    <property type="protein sequence ID" value="EAL66489.1"/>
    <property type="molecule type" value="Genomic_DNA"/>
</dbReference>
<dbReference type="RefSeq" id="XP_640463.1">
    <property type="nucleotide sequence ID" value="XM_635371.1"/>
</dbReference>
<dbReference type="SMR" id="Q54TC6"/>
<dbReference type="FunCoup" id="Q54TC6">
    <property type="interactions" value="6"/>
</dbReference>
<dbReference type="STRING" id="44689.Q54TC6"/>
<dbReference type="PaxDb" id="44689-DDB0204251"/>
<dbReference type="EnsemblProtists" id="EAL66489">
    <property type="protein sequence ID" value="EAL66489"/>
    <property type="gene ID" value="DDB_G0281859"/>
</dbReference>
<dbReference type="GeneID" id="8623276"/>
<dbReference type="KEGG" id="ddi:DDB_G0281859"/>
<dbReference type="dictyBase" id="DDB_G0281859">
    <property type="gene designation" value="bloc1s5"/>
</dbReference>
<dbReference type="VEuPathDB" id="AmoebaDB:DDB_G0281859"/>
<dbReference type="eggNOG" id="ENOG502RHUK">
    <property type="taxonomic scope" value="Eukaryota"/>
</dbReference>
<dbReference type="HOGENOM" id="CLU_1672525_0_0_1"/>
<dbReference type="InParanoid" id="Q54TC6"/>
<dbReference type="OMA" id="RDKYQIV"/>
<dbReference type="PRO" id="PR:Q54TC6"/>
<dbReference type="Proteomes" id="UP000002195">
    <property type="component" value="Chromosome 3"/>
</dbReference>
<dbReference type="GO" id="GO:0031083">
    <property type="term" value="C:BLOC-1 complex"/>
    <property type="evidence" value="ECO:0000318"/>
    <property type="project" value="GO_Central"/>
</dbReference>
<dbReference type="GO" id="GO:0030133">
    <property type="term" value="C:transport vesicle"/>
    <property type="evidence" value="ECO:0007669"/>
    <property type="project" value="InterPro"/>
</dbReference>
<dbReference type="InterPro" id="IPR017243">
    <property type="entry name" value="Bloc1s5"/>
</dbReference>
<dbReference type="PANTHER" id="PTHR31784">
    <property type="entry name" value="BIOGENESIS OF LYSOSOME-RELATED ORGANELLES COMPLEX 1 SUBUNIT 5"/>
    <property type="match status" value="1"/>
</dbReference>
<dbReference type="PANTHER" id="PTHR31784:SF2">
    <property type="entry name" value="BIOGENESIS OF LYSOSOME-RELATED ORGANELLES COMPLEX 1 SUBUNIT 5"/>
    <property type="match status" value="1"/>
</dbReference>
<dbReference type="Pfam" id="PF14942">
    <property type="entry name" value="Muted"/>
    <property type="match status" value="1"/>
</dbReference>
<dbReference type="PIRSF" id="PIRSF037610">
    <property type="entry name" value="BLOC-1_complex_muted_subunit"/>
    <property type="match status" value="1"/>
</dbReference>
<protein>
    <recommendedName>
        <fullName>Biogenesis of lysosome-related organelles complex 1 subunit 5</fullName>
        <shortName>BLOC-1 subunit 5</shortName>
    </recommendedName>
    <alternativeName>
        <fullName>Protein Muted homolog</fullName>
    </alternativeName>
</protein>
<proteinExistence type="evidence at transcript level"/>
<sequence>MNPKDKRVNFGSMEPLIRDIGTVYEFYFDQNTFIESEIKTFLKEFETKRGDRDLYSLSQQTINANNTIVNINRSIHQSSQFLENINNNLNQINSKLSTQVENESIHQEQRNNDRLNKFELELVEKKSIEDSFNQRKSQIENDFNEKASVLRDKYQIVL</sequence>
<feature type="chain" id="PRO_0000330838" description="Biogenesis of lysosome-related organelles complex 1 subunit 5">
    <location>
        <begin position="1"/>
        <end position="158"/>
    </location>
</feature>
<gene>
    <name type="primary">bloc1s5</name>
    <name type="synonym">muted</name>
    <name type="ORF">DDB_G0281859</name>
</gene>
<reference key="1">
    <citation type="journal article" date="2005" name="Nature">
        <title>The genome of the social amoeba Dictyostelium discoideum.</title>
        <authorList>
            <person name="Eichinger L."/>
            <person name="Pachebat J.A."/>
            <person name="Gloeckner G."/>
            <person name="Rajandream M.A."/>
            <person name="Sucgang R."/>
            <person name="Berriman M."/>
            <person name="Song J."/>
            <person name="Olsen R."/>
            <person name="Szafranski K."/>
            <person name="Xu Q."/>
            <person name="Tunggal B."/>
            <person name="Kummerfeld S."/>
            <person name="Madera M."/>
            <person name="Konfortov B.A."/>
            <person name="Rivero F."/>
            <person name="Bankier A.T."/>
            <person name="Lehmann R."/>
            <person name="Hamlin N."/>
            <person name="Davies R."/>
            <person name="Gaudet P."/>
            <person name="Fey P."/>
            <person name="Pilcher K."/>
            <person name="Chen G."/>
            <person name="Saunders D."/>
            <person name="Sodergren E.J."/>
            <person name="Davis P."/>
            <person name="Kerhornou A."/>
            <person name="Nie X."/>
            <person name="Hall N."/>
            <person name="Anjard C."/>
            <person name="Hemphill L."/>
            <person name="Bason N."/>
            <person name="Farbrother P."/>
            <person name="Desany B."/>
            <person name="Just E."/>
            <person name="Morio T."/>
            <person name="Rost R."/>
            <person name="Churcher C.M."/>
            <person name="Cooper J."/>
            <person name="Haydock S."/>
            <person name="van Driessche N."/>
            <person name="Cronin A."/>
            <person name="Goodhead I."/>
            <person name="Muzny D.M."/>
            <person name="Mourier T."/>
            <person name="Pain A."/>
            <person name="Lu M."/>
            <person name="Harper D."/>
            <person name="Lindsay R."/>
            <person name="Hauser H."/>
            <person name="James K.D."/>
            <person name="Quiles M."/>
            <person name="Madan Babu M."/>
            <person name="Saito T."/>
            <person name="Buchrieser C."/>
            <person name="Wardroper A."/>
            <person name="Felder M."/>
            <person name="Thangavelu M."/>
            <person name="Johnson D."/>
            <person name="Knights A."/>
            <person name="Loulseged H."/>
            <person name="Mungall K.L."/>
            <person name="Oliver K."/>
            <person name="Price C."/>
            <person name="Quail M.A."/>
            <person name="Urushihara H."/>
            <person name="Hernandez J."/>
            <person name="Rabbinowitsch E."/>
            <person name="Steffen D."/>
            <person name="Sanders M."/>
            <person name="Ma J."/>
            <person name="Kohara Y."/>
            <person name="Sharp S."/>
            <person name="Simmonds M.N."/>
            <person name="Spiegler S."/>
            <person name="Tivey A."/>
            <person name="Sugano S."/>
            <person name="White B."/>
            <person name="Walker D."/>
            <person name="Woodward J.R."/>
            <person name="Winckler T."/>
            <person name="Tanaka Y."/>
            <person name="Shaulsky G."/>
            <person name="Schleicher M."/>
            <person name="Weinstock G.M."/>
            <person name="Rosenthal A."/>
            <person name="Cox E.C."/>
            <person name="Chisholm R.L."/>
            <person name="Gibbs R.A."/>
            <person name="Loomis W.F."/>
            <person name="Platzer M."/>
            <person name="Kay R.R."/>
            <person name="Williams J.G."/>
            <person name="Dear P.H."/>
            <person name="Noegel A.A."/>
            <person name="Barrell B.G."/>
            <person name="Kuspa A."/>
        </authorList>
    </citation>
    <scope>NUCLEOTIDE SEQUENCE [LARGE SCALE GENOMIC DNA]</scope>
    <source>
        <strain>AX4</strain>
    </source>
</reference>
<name>BL1S5_DICDI</name>
<organism>
    <name type="scientific">Dictyostelium discoideum</name>
    <name type="common">Social amoeba</name>
    <dbReference type="NCBI Taxonomy" id="44689"/>
    <lineage>
        <taxon>Eukaryota</taxon>
        <taxon>Amoebozoa</taxon>
        <taxon>Evosea</taxon>
        <taxon>Eumycetozoa</taxon>
        <taxon>Dictyostelia</taxon>
        <taxon>Dictyosteliales</taxon>
        <taxon>Dictyosteliaceae</taxon>
        <taxon>Dictyostelium</taxon>
    </lineage>
</organism>
<accession>Q54TC6</accession>
<keyword id="KW-1185">Reference proteome</keyword>
<evidence type="ECO:0000250" key="1"/>
<evidence type="ECO:0000305" key="2"/>